<proteinExistence type="inferred from homology"/>
<sequence length="201" mass="23245">MSRYRGPRFKKIRRLGALPGLTSKRPRAGSDLRNQSRSGKKSQYRIRLEEKQKLRFHYGLTERQLLKYVRIAGKAKGSTGQVLLQLLEMRLDNILFRLGMALTIPQARQLVNHGHILVNGRIVDIPSYRCKPRDIITVKDEQNSRTLVQNLLDSSAPEELPNHLTLHTFQYEGLVNQIIDRKCVGLKINELLVVEYYSRQT</sequence>
<organism>
    <name type="scientific">Lobularia maritima</name>
    <name type="common">Sweet alyssum</name>
    <name type="synonym">Alyssum maritimum</name>
    <dbReference type="NCBI Taxonomy" id="226051"/>
    <lineage>
        <taxon>Eukaryota</taxon>
        <taxon>Viridiplantae</taxon>
        <taxon>Streptophyta</taxon>
        <taxon>Embryophyta</taxon>
        <taxon>Tracheophyta</taxon>
        <taxon>Spermatophyta</taxon>
        <taxon>Magnoliopsida</taxon>
        <taxon>eudicotyledons</taxon>
        <taxon>Gunneridae</taxon>
        <taxon>Pentapetalae</taxon>
        <taxon>rosids</taxon>
        <taxon>malvids</taxon>
        <taxon>Brassicales</taxon>
        <taxon>Brassicaceae</taxon>
        <taxon>Anastaticeae</taxon>
        <taxon>Lobularia</taxon>
    </lineage>
</organism>
<evidence type="ECO:0000250" key="1"/>
<evidence type="ECO:0000256" key="2">
    <source>
        <dbReference type="SAM" id="MobiDB-lite"/>
    </source>
</evidence>
<evidence type="ECO:0000305" key="3"/>
<name>RR4_LOBMA</name>
<protein>
    <recommendedName>
        <fullName evidence="3">Small ribosomal subunit protein uS4c</fullName>
    </recommendedName>
    <alternativeName>
        <fullName>30S ribosomal protein S4, chloroplastic</fullName>
    </alternativeName>
</protein>
<feature type="chain" id="PRO_0000293430" description="Small ribosomal subunit protein uS4c">
    <location>
        <begin position="1"/>
        <end position="201"/>
    </location>
</feature>
<feature type="domain" description="S4 RNA-binding">
    <location>
        <begin position="89"/>
        <end position="152"/>
    </location>
</feature>
<feature type="region of interest" description="Disordered" evidence="2">
    <location>
        <begin position="20"/>
        <end position="44"/>
    </location>
</feature>
<gene>
    <name type="primary">rps4</name>
</gene>
<comment type="function">
    <text evidence="1">One of the primary rRNA binding proteins, it binds directly to 16S rRNA where it nucleates assembly of the body of the 30S subunit.</text>
</comment>
<comment type="function">
    <text evidence="1">With S5 and S12 plays an important role in translational accuracy.</text>
</comment>
<comment type="subunit">
    <text evidence="1">Part of the 30S ribosomal subunit. Contacts protein S5. The interaction surface between S4 and S5 is involved in control of translational fidelity (By similarity).</text>
</comment>
<comment type="subcellular location">
    <subcellularLocation>
        <location>Plastid</location>
        <location>Chloroplast</location>
    </subcellularLocation>
</comment>
<comment type="similarity">
    <text evidence="3">Belongs to the universal ribosomal protein uS4 family.</text>
</comment>
<geneLocation type="chloroplast"/>
<accession>A4QLJ6</accession>
<keyword id="KW-0150">Chloroplast</keyword>
<keyword id="KW-0934">Plastid</keyword>
<keyword id="KW-0687">Ribonucleoprotein</keyword>
<keyword id="KW-0689">Ribosomal protein</keyword>
<keyword id="KW-0694">RNA-binding</keyword>
<keyword id="KW-0699">rRNA-binding</keyword>
<reference key="1">
    <citation type="submission" date="2007-03" db="EMBL/GenBank/DDBJ databases">
        <title>Sequencing analysis of Lobularia maritima chloroplast DNA.</title>
        <authorList>
            <person name="Hosouchi T."/>
            <person name="Tsuruoka H."/>
            <person name="Kotani H."/>
        </authorList>
    </citation>
    <scope>NUCLEOTIDE SEQUENCE [LARGE SCALE GENOMIC DNA]</scope>
</reference>
<dbReference type="EMBL" id="AP009375">
    <property type="protein sequence ID" value="BAF50551.1"/>
    <property type="molecule type" value="Genomic_DNA"/>
</dbReference>
<dbReference type="RefSeq" id="YP_001123727.1">
    <property type="nucleotide sequence ID" value="NC_009274.1"/>
</dbReference>
<dbReference type="SMR" id="A4QLJ6"/>
<dbReference type="GeneID" id="4964849"/>
<dbReference type="GO" id="GO:0009507">
    <property type="term" value="C:chloroplast"/>
    <property type="evidence" value="ECO:0007669"/>
    <property type="project" value="UniProtKB-SubCell"/>
</dbReference>
<dbReference type="GO" id="GO:0015935">
    <property type="term" value="C:small ribosomal subunit"/>
    <property type="evidence" value="ECO:0007669"/>
    <property type="project" value="InterPro"/>
</dbReference>
<dbReference type="GO" id="GO:0019843">
    <property type="term" value="F:rRNA binding"/>
    <property type="evidence" value="ECO:0007669"/>
    <property type="project" value="UniProtKB-UniRule"/>
</dbReference>
<dbReference type="GO" id="GO:0003735">
    <property type="term" value="F:structural constituent of ribosome"/>
    <property type="evidence" value="ECO:0007669"/>
    <property type="project" value="InterPro"/>
</dbReference>
<dbReference type="GO" id="GO:0042274">
    <property type="term" value="P:ribosomal small subunit biogenesis"/>
    <property type="evidence" value="ECO:0007669"/>
    <property type="project" value="TreeGrafter"/>
</dbReference>
<dbReference type="GO" id="GO:0006412">
    <property type="term" value="P:translation"/>
    <property type="evidence" value="ECO:0007669"/>
    <property type="project" value="UniProtKB-UniRule"/>
</dbReference>
<dbReference type="CDD" id="cd00165">
    <property type="entry name" value="S4"/>
    <property type="match status" value="1"/>
</dbReference>
<dbReference type="FunFam" id="1.10.1050.10:FF:000002">
    <property type="entry name" value="30S ribosomal protein S4, chloroplastic"/>
    <property type="match status" value="1"/>
</dbReference>
<dbReference type="FunFam" id="3.10.290.10:FF:000081">
    <property type="entry name" value="30S ribosomal protein S4, chloroplastic"/>
    <property type="match status" value="1"/>
</dbReference>
<dbReference type="Gene3D" id="1.10.1050.10">
    <property type="entry name" value="Ribosomal Protein S4 Delta 41, Chain A, domain 1"/>
    <property type="match status" value="1"/>
</dbReference>
<dbReference type="Gene3D" id="3.10.290.10">
    <property type="entry name" value="RNA-binding S4 domain"/>
    <property type="match status" value="1"/>
</dbReference>
<dbReference type="HAMAP" id="MF_01306_B">
    <property type="entry name" value="Ribosomal_uS4_B"/>
    <property type="match status" value="1"/>
</dbReference>
<dbReference type="InterPro" id="IPR022801">
    <property type="entry name" value="Ribosomal_uS4"/>
</dbReference>
<dbReference type="InterPro" id="IPR005709">
    <property type="entry name" value="Ribosomal_uS4_bac-type"/>
</dbReference>
<dbReference type="InterPro" id="IPR018079">
    <property type="entry name" value="Ribosomal_uS4_CS"/>
</dbReference>
<dbReference type="InterPro" id="IPR001912">
    <property type="entry name" value="Ribosomal_uS4_N"/>
</dbReference>
<dbReference type="InterPro" id="IPR002942">
    <property type="entry name" value="S4_RNA-bd"/>
</dbReference>
<dbReference type="InterPro" id="IPR036986">
    <property type="entry name" value="S4_RNA-bd_sf"/>
</dbReference>
<dbReference type="NCBIfam" id="NF003717">
    <property type="entry name" value="PRK05327.1"/>
    <property type="match status" value="1"/>
</dbReference>
<dbReference type="NCBIfam" id="TIGR01017">
    <property type="entry name" value="rpsD_bact"/>
    <property type="match status" value="1"/>
</dbReference>
<dbReference type="PANTHER" id="PTHR11831">
    <property type="entry name" value="30S 40S RIBOSOMAL PROTEIN"/>
    <property type="match status" value="1"/>
</dbReference>
<dbReference type="PANTHER" id="PTHR11831:SF4">
    <property type="entry name" value="SMALL RIBOSOMAL SUBUNIT PROTEIN US4M"/>
    <property type="match status" value="1"/>
</dbReference>
<dbReference type="Pfam" id="PF00163">
    <property type="entry name" value="Ribosomal_S4"/>
    <property type="match status" value="1"/>
</dbReference>
<dbReference type="Pfam" id="PF01479">
    <property type="entry name" value="S4"/>
    <property type="match status" value="1"/>
</dbReference>
<dbReference type="SMART" id="SM01390">
    <property type="entry name" value="Ribosomal_S4"/>
    <property type="match status" value="1"/>
</dbReference>
<dbReference type="SMART" id="SM00363">
    <property type="entry name" value="S4"/>
    <property type="match status" value="1"/>
</dbReference>
<dbReference type="SUPFAM" id="SSF55174">
    <property type="entry name" value="Alpha-L RNA-binding motif"/>
    <property type="match status" value="1"/>
</dbReference>
<dbReference type="PROSITE" id="PS00632">
    <property type="entry name" value="RIBOSOMAL_S4"/>
    <property type="match status" value="1"/>
</dbReference>
<dbReference type="PROSITE" id="PS50889">
    <property type="entry name" value="S4"/>
    <property type="match status" value="1"/>
</dbReference>